<sequence>MNQMNQPPNKCQTYLNLGSPLSAISSSPDSTKLIVAGRDIVKIVSVQNNEFKVTSNLRAGKTQSLNYTGNDCCWHPSLLENYRFLIATAATNGAVVIWNTVREGSKSVERVFTDHSRAVNKLAWHPEKLDCILTGSQDNTLRMWDIRDSANASKITFSPKSESIRDVQFNPSQANQFAAAFDNGTIQLWDIRKPTIAVEKITSHQGLVLTIDWHPEEKNIIASGGRDRAIRVWDFSNGKSLNNVSTISSVSRIKWRPGNKWHIASCSSIVDFQIHIWDVKKPYIPLFSFTDHRDVPTGLIWKSPSSLISCSKDSHLLLNEFQDSYKPYQHIRTTGITWNVNNELASINDKINRTQSNESLPSLSTQFPSFFASFNVPTPPPLPPLVKVEQGIMNIYTPKYQNSEIVYDEKYLFEHFAKNYRFRGESFNQLCDHNQFVSQSVNQHHISTMWSLLKLHYSNLDEIQQHKELIEQQQKEELEKLNNKKIEKQQPQKLKKQQQQQQQQQQQQQQQSQQQLQQPQLQQPQQQQQLQQPQQQLRQQNDKNIKEQQIQYIENLENKQLDSKNIIDNSNDSNQEININKEDKEDEEEDDDNTSNNLDDNQMGDIFDPSNDMMTAKEPPSSSLMEFNANDTGNDQFCNILSAEAVTPLVSLPTSISLERQKSTDNISDNNSNVHVNIKRQNQPTNNNNNNSNIDNLEKKSNKSKSTKENKESSLTDQNKQKRNDNKEKIDNNEIDNDNKDNNDDDDNDVDNIGEDNDEINNNNDNNNNNNNNNNNNNNNNNNNNNNNNNNNNNNNNKNNNNDNNNNNNINNKKNKIKNKSIENKKDILDKKEINDEDNKSNDENDSLKILIPCFEFEEFNFQPIITDMLEACIEKGDVQTCVFIVLILGRYMDLNIEKHRLTTWFGSYIELLQRYKMWSLALEVMKYCDDQIINQASKRHTTLISACSSCGKSIPQNSIICEKCNKASSKCSICRLPVKGMWVWCQGCGHGGHLEHMKSWFIDKNQKSCPTGCTHICTPFKK</sequence>
<organism>
    <name type="scientific">Dictyostelium discoideum</name>
    <name type="common">Social amoeba</name>
    <dbReference type="NCBI Taxonomy" id="44689"/>
    <lineage>
        <taxon>Eukaryota</taxon>
        <taxon>Amoebozoa</taxon>
        <taxon>Evosea</taxon>
        <taxon>Eumycetozoa</taxon>
        <taxon>Dictyostelia</taxon>
        <taxon>Dictyosteliales</taxon>
        <taxon>Dictyosteliaceae</taxon>
        <taxon>Dictyostelium</taxon>
    </lineage>
</organism>
<dbReference type="EC" id="2.3.2.27" evidence="1"/>
<dbReference type="EMBL" id="AAFI02000104">
    <property type="protein sequence ID" value="EAL63555.1"/>
    <property type="molecule type" value="Genomic_DNA"/>
</dbReference>
<dbReference type="RefSeq" id="XP_637077.1">
    <property type="nucleotide sequence ID" value="XM_631985.1"/>
</dbReference>
<dbReference type="SMR" id="Q54JS5"/>
<dbReference type="FunCoup" id="Q54JS5">
    <property type="interactions" value="180"/>
</dbReference>
<dbReference type="STRING" id="44689.Q54JS5"/>
<dbReference type="PaxDb" id="44689-DDB0304352"/>
<dbReference type="EnsemblProtists" id="EAL63555">
    <property type="protein sequence ID" value="EAL63555"/>
    <property type="gene ID" value="DDB_G0287817"/>
</dbReference>
<dbReference type="GeneID" id="8626332"/>
<dbReference type="KEGG" id="ddi:DDB_G0287817"/>
<dbReference type="dictyBase" id="DDB_G0287817">
    <property type="gene designation" value="wdr24"/>
</dbReference>
<dbReference type="VEuPathDB" id="AmoebaDB:DDB_G0287817"/>
<dbReference type="eggNOG" id="KOG0269">
    <property type="taxonomic scope" value="Eukaryota"/>
</dbReference>
<dbReference type="HOGENOM" id="CLU_010233_0_0_1"/>
<dbReference type="InParanoid" id="Q54JS5"/>
<dbReference type="OMA" id="EPMWLIS"/>
<dbReference type="Reactome" id="R-DDI-9639288">
    <property type="pathway name" value="Amino acids regulate mTORC1"/>
</dbReference>
<dbReference type="UniPathway" id="UPA00143"/>
<dbReference type="PRO" id="PR:Q54JS5"/>
<dbReference type="Proteomes" id="UP000002195">
    <property type="component" value="Chromosome 5"/>
</dbReference>
<dbReference type="GO" id="GO:0005829">
    <property type="term" value="C:cytosol"/>
    <property type="evidence" value="ECO:0000318"/>
    <property type="project" value="GO_Central"/>
</dbReference>
<dbReference type="GO" id="GO:0061700">
    <property type="term" value="C:GATOR2 complex"/>
    <property type="evidence" value="ECO:0000318"/>
    <property type="project" value="GO_Central"/>
</dbReference>
<dbReference type="GO" id="GO:0005765">
    <property type="term" value="C:lysosomal membrane"/>
    <property type="evidence" value="ECO:0000250"/>
    <property type="project" value="UniProtKB"/>
</dbReference>
<dbReference type="GO" id="GO:0005774">
    <property type="term" value="C:vacuolar membrane"/>
    <property type="evidence" value="ECO:0000318"/>
    <property type="project" value="GO_Central"/>
</dbReference>
<dbReference type="GO" id="GO:0016740">
    <property type="term" value="F:transferase activity"/>
    <property type="evidence" value="ECO:0007669"/>
    <property type="project" value="UniProtKB-KW"/>
</dbReference>
<dbReference type="GO" id="GO:0008270">
    <property type="term" value="F:zinc ion binding"/>
    <property type="evidence" value="ECO:0007669"/>
    <property type="project" value="UniProtKB-KW"/>
</dbReference>
<dbReference type="GO" id="GO:0016239">
    <property type="term" value="P:positive regulation of macroautophagy"/>
    <property type="evidence" value="ECO:0000318"/>
    <property type="project" value="GO_Central"/>
</dbReference>
<dbReference type="GO" id="GO:1904263">
    <property type="term" value="P:positive regulation of TORC1 signaling"/>
    <property type="evidence" value="ECO:0000318"/>
    <property type="project" value="GO_Central"/>
</dbReference>
<dbReference type="GO" id="GO:0016567">
    <property type="term" value="P:protein ubiquitination"/>
    <property type="evidence" value="ECO:0007669"/>
    <property type="project" value="UniProtKB-UniPathway"/>
</dbReference>
<dbReference type="CDD" id="cd16693">
    <property type="entry name" value="mRING-H2-C3H3C2_WDR24"/>
    <property type="match status" value="1"/>
</dbReference>
<dbReference type="FunFam" id="2.130.10.10:FF:002920">
    <property type="entry name" value="Uncharacterized WD repeat-containing protein C4F8.11"/>
    <property type="match status" value="1"/>
</dbReference>
<dbReference type="FunFam" id="2.130.10.10:FF:002932">
    <property type="entry name" value="Uncharacterized WD repeat-containing protein C4F8.11"/>
    <property type="match status" value="1"/>
</dbReference>
<dbReference type="Gene3D" id="2.130.10.10">
    <property type="entry name" value="YVTN repeat-like/Quinoprotein amine dehydrogenase"/>
    <property type="match status" value="2"/>
</dbReference>
<dbReference type="InterPro" id="IPR020472">
    <property type="entry name" value="G-protein_beta_WD-40_rep"/>
</dbReference>
<dbReference type="InterPro" id="IPR015943">
    <property type="entry name" value="WD40/YVTN_repeat-like_dom_sf"/>
</dbReference>
<dbReference type="InterPro" id="IPR019775">
    <property type="entry name" value="WD40_repeat_CS"/>
</dbReference>
<dbReference type="InterPro" id="IPR036322">
    <property type="entry name" value="WD40_repeat_dom_sf"/>
</dbReference>
<dbReference type="InterPro" id="IPR001680">
    <property type="entry name" value="WD40_rpt"/>
</dbReference>
<dbReference type="InterPro" id="IPR037590">
    <property type="entry name" value="WDR24"/>
</dbReference>
<dbReference type="InterPro" id="IPR049566">
    <property type="entry name" value="WDR59_RTC1-like_RING_Znf"/>
</dbReference>
<dbReference type="PANTHER" id="PTHR46200">
    <property type="entry name" value="GATOR COMPLEX PROTEIN WDR24"/>
    <property type="match status" value="1"/>
</dbReference>
<dbReference type="PANTHER" id="PTHR46200:SF1">
    <property type="entry name" value="GATOR COMPLEX PROTEIN WDR24"/>
    <property type="match status" value="1"/>
</dbReference>
<dbReference type="Pfam" id="PF23609">
    <property type="entry name" value="Beta-prop_EIPR1"/>
    <property type="match status" value="1"/>
</dbReference>
<dbReference type="Pfam" id="PF17120">
    <property type="entry name" value="zf-RING_16"/>
    <property type="match status" value="1"/>
</dbReference>
<dbReference type="PRINTS" id="PR00320">
    <property type="entry name" value="GPROTEINBRPT"/>
</dbReference>
<dbReference type="SMART" id="SM00320">
    <property type="entry name" value="WD40"/>
    <property type="match status" value="7"/>
</dbReference>
<dbReference type="SUPFAM" id="SSF81995">
    <property type="entry name" value="beta-sandwich domain of Sec23/24"/>
    <property type="match status" value="1"/>
</dbReference>
<dbReference type="SUPFAM" id="SSF50978">
    <property type="entry name" value="WD40 repeat-like"/>
    <property type="match status" value="1"/>
</dbReference>
<dbReference type="PROSITE" id="PS00678">
    <property type="entry name" value="WD_REPEATS_1"/>
    <property type="match status" value="4"/>
</dbReference>
<dbReference type="PROSITE" id="PS50082">
    <property type="entry name" value="WD_REPEATS_2"/>
    <property type="match status" value="3"/>
</dbReference>
<dbReference type="PROSITE" id="PS50294">
    <property type="entry name" value="WD_REPEATS_REGION"/>
    <property type="match status" value="1"/>
</dbReference>
<protein>
    <recommendedName>
        <fullName evidence="4">GATOR2 complex protein WDR24</fullName>
        <ecNumber evidence="1">2.3.2.27</ecNumber>
    </recommendedName>
</protein>
<accession>Q54JS5</accession>
<reference key="1">
    <citation type="journal article" date="2005" name="Nature">
        <title>The genome of the social amoeba Dictyostelium discoideum.</title>
        <authorList>
            <person name="Eichinger L."/>
            <person name="Pachebat J.A."/>
            <person name="Gloeckner G."/>
            <person name="Rajandream M.A."/>
            <person name="Sucgang R."/>
            <person name="Berriman M."/>
            <person name="Song J."/>
            <person name="Olsen R."/>
            <person name="Szafranski K."/>
            <person name="Xu Q."/>
            <person name="Tunggal B."/>
            <person name="Kummerfeld S."/>
            <person name="Madera M."/>
            <person name="Konfortov B.A."/>
            <person name="Rivero F."/>
            <person name="Bankier A.T."/>
            <person name="Lehmann R."/>
            <person name="Hamlin N."/>
            <person name="Davies R."/>
            <person name="Gaudet P."/>
            <person name="Fey P."/>
            <person name="Pilcher K."/>
            <person name="Chen G."/>
            <person name="Saunders D."/>
            <person name="Sodergren E.J."/>
            <person name="Davis P."/>
            <person name="Kerhornou A."/>
            <person name="Nie X."/>
            <person name="Hall N."/>
            <person name="Anjard C."/>
            <person name="Hemphill L."/>
            <person name="Bason N."/>
            <person name="Farbrother P."/>
            <person name="Desany B."/>
            <person name="Just E."/>
            <person name="Morio T."/>
            <person name="Rost R."/>
            <person name="Churcher C.M."/>
            <person name="Cooper J."/>
            <person name="Haydock S."/>
            <person name="van Driessche N."/>
            <person name="Cronin A."/>
            <person name="Goodhead I."/>
            <person name="Muzny D.M."/>
            <person name="Mourier T."/>
            <person name="Pain A."/>
            <person name="Lu M."/>
            <person name="Harper D."/>
            <person name="Lindsay R."/>
            <person name="Hauser H."/>
            <person name="James K.D."/>
            <person name="Quiles M."/>
            <person name="Madan Babu M."/>
            <person name="Saito T."/>
            <person name="Buchrieser C."/>
            <person name="Wardroper A."/>
            <person name="Felder M."/>
            <person name="Thangavelu M."/>
            <person name="Johnson D."/>
            <person name="Knights A."/>
            <person name="Loulseged H."/>
            <person name="Mungall K.L."/>
            <person name="Oliver K."/>
            <person name="Price C."/>
            <person name="Quail M.A."/>
            <person name="Urushihara H."/>
            <person name="Hernandez J."/>
            <person name="Rabbinowitsch E."/>
            <person name="Steffen D."/>
            <person name="Sanders M."/>
            <person name="Ma J."/>
            <person name="Kohara Y."/>
            <person name="Sharp S."/>
            <person name="Simmonds M.N."/>
            <person name="Spiegler S."/>
            <person name="Tivey A."/>
            <person name="Sugano S."/>
            <person name="White B."/>
            <person name="Walker D."/>
            <person name="Woodward J.R."/>
            <person name="Winckler T."/>
            <person name="Tanaka Y."/>
            <person name="Shaulsky G."/>
            <person name="Schleicher M."/>
            <person name="Weinstock G.M."/>
            <person name="Rosenthal A."/>
            <person name="Cox E.C."/>
            <person name="Chisholm R.L."/>
            <person name="Gibbs R.A."/>
            <person name="Loomis W.F."/>
            <person name="Platzer M."/>
            <person name="Kay R.R."/>
            <person name="Williams J.G."/>
            <person name="Dear P.H."/>
            <person name="Noegel A.A."/>
            <person name="Barrell B.G."/>
            <person name="Kuspa A."/>
        </authorList>
    </citation>
    <scope>NUCLEOTIDE SEQUENCE [LARGE SCALE GENOMIC DNA]</scope>
    <source>
        <strain>AX4</strain>
    </source>
</reference>
<proteinExistence type="inferred from homology"/>
<name>WDR24_DICDI</name>
<keyword id="KW-0458">Lysosome</keyword>
<keyword id="KW-0472">Membrane</keyword>
<keyword id="KW-0479">Metal-binding</keyword>
<keyword id="KW-1185">Reference proteome</keyword>
<keyword id="KW-0677">Repeat</keyword>
<keyword id="KW-0808">Transferase</keyword>
<keyword id="KW-0833">Ubl conjugation pathway</keyword>
<keyword id="KW-0853">WD repeat</keyword>
<keyword id="KW-0862">Zinc</keyword>
<keyword id="KW-0863">Zinc-finger</keyword>
<gene>
    <name evidence="1" type="primary">wdr24</name>
    <name type="ORF">DDB_G0287817</name>
</gene>
<feature type="chain" id="PRO_0000356839" description="GATOR2 complex protein WDR24">
    <location>
        <begin position="1"/>
        <end position="1023"/>
    </location>
</feature>
<feature type="repeat" description="WD 1">
    <location>
        <begin position="16"/>
        <end position="54"/>
    </location>
</feature>
<feature type="repeat" description="WD 2">
    <location>
        <begin position="64"/>
        <end position="108"/>
    </location>
</feature>
<feature type="repeat" description="WD 3">
    <location>
        <begin position="114"/>
        <end position="154"/>
    </location>
</feature>
<feature type="repeat" description="WD 4">
    <location>
        <begin position="159"/>
        <end position="199"/>
    </location>
</feature>
<feature type="repeat" description="WD 5">
    <location>
        <begin position="203"/>
        <end position="243"/>
    </location>
</feature>
<feature type="repeat" description="WD 6">
    <location>
        <begin position="245"/>
        <end position="287"/>
    </location>
</feature>
<feature type="repeat" description="WD 7">
    <location>
        <begin position="291"/>
        <end position="329"/>
    </location>
</feature>
<feature type="zinc finger region" description="C4-type" evidence="1">
    <location>
        <begin position="947"/>
        <end position="969"/>
    </location>
</feature>
<feature type="zinc finger region" description="RING-type; atypical" evidence="1">
    <location>
        <begin position="970"/>
        <end position="1021"/>
    </location>
</feature>
<feature type="region of interest" description="Disordered" evidence="3">
    <location>
        <begin position="563"/>
        <end position="621"/>
    </location>
</feature>
<feature type="region of interest" description="Disordered" evidence="3">
    <location>
        <begin position="661"/>
        <end position="824"/>
    </location>
</feature>
<feature type="compositionally biased region" description="Low complexity" evidence="3">
    <location>
        <begin position="563"/>
        <end position="578"/>
    </location>
</feature>
<feature type="compositionally biased region" description="Acidic residues" evidence="3">
    <location>
        <begin position="584"/>
        <end position="593"/>
    </location>
</feature>
<feature type="compositionally biased region" description="Polar residues" evidence="3">
    <location>
        <begin position="661"/>
        <end position="681"/>
    </location>
</feature>
<feature type="compositionally biased region" description="Low complexity" evidence="3">
    <location>
        <begin position="682"/>
        <end position="695"/>
    </location>
</feature>
<feature type="compositionally biased region" description="Basic and acidic residues" evidence="3">
    <location>
        <begin position="696"/>
        <end position="742"/>
    </location>
</feature>
<feature type="compositionally biased region" description="Acidic residues" evidence="3">
    <location>
        <begin position="743"/>
        <end position="759"/>
    </location>
</feature>
<feature type="compositionally biased region" description="Low complexity" evidence="3">
    <location>
        <begin position="760"/>
        <end position="812"/>
    </location>
</feature>
<feature type="binding site" evidence="1">
    <location>
        <position position="948"/>
    </location>
    <ligand>
        <name>Zn(2+)</name>
        <dbReference type="ChEBI" id="CHEBI:29105"/>
        <label>1</label>
    </ligand>
</feature>
<feature type="binding site" evidence="1">
    <location>
        <position position="951"/>
    </location>
    <ligand>
        <name>Zn(2+)</name>
        <dbReference type="ChEBI" id="CHEBI:29105"/>
        <label>1</label>
    </ligand>
</feature>
<feature type="binding site" evidence="1">
    <location>
        <position position="962"/>
    </location>
    <ligand>
        <name>Zn(2+)</name>
        <dbReference type="ChEBI" id="CHEBI:29105"/>
        <label>1</label>
    </ligand>
</feature>
<feature type="binding site" evidence="1">
    <location>
        <position position="965"/>
    </location>
    <ligand>
        <name>Zn(2+)</name>
        <dbReference type="ChEBI" id="CHEBI:29105"/>
        <label>1</label>
    </ligand>
</feature>
<feature type="binding site" evidence="1">
    <location>
        <position position="972"/>
    </location>
    <ligand>
        <name>Zn(2+)</name>
        <dbReference type="ChEBI" id="CHEBI:29105"/>
        <label>2</label>
    </ligand>
</feature>
<feature type="binding site" evidence="1">
    <location>
        <position position="975"/>
    </location>
    <ligand>
        <name>Zn(2+)</name>
        <dbReference type="ChEBI" id="CHEBI:29105"/>
        <label>2</label>
    </ligand>
</feature>
<feature type="binding site" evidence="1">
    <location>
        <position position="986"/>
    </location>
    <ligand>
        <name>Zn(2+)</name>
        <dbReference type="ChEBI" id="CHEBI:29105"/>
        <label>3</label>
    </ligand>
</feature>
<feature type="binding site" evidence="1">
    <location>
        <position position="989"/>
    </location>
    <ligand>
        <name>Zn(2+)</name>
        <dbReference type="ChEBI" id="CHEBI:29105"/>
        <label>3</label>
    </ligand>
</feature>
<feature type="binding site" evidence="1">
    <location>
        <position position="991"/>
    </location>
    <ligand>
        <name>Zn(2+)</name>
        <dbReference type="ChEBI" id="CHEBI:29105"/>
        <label>4</label>
    </ligand>
</feature>
<feature type="binding site" evidence="1">
    <location>
        <position position="994"/>
    </location>
    <ligand>
        <name>Zn(2+)</name>
        <dbReference type="ChEBI" id="CHEBI:29105"/>
        <label>2</label>
    </ligand>
</feature>
<feature type="binding site" evidence="1">
    <location>
        <position position="997"/>
    </location>
    <ligand>
        <name>Zn(2+)</name>
        <dbReference type="ChEBI" id="CHEBI:29105"/>
        <label>2</label>
    </ligand>
</feature>
<feature type="binding site" evidence="1">
    <location>
        <position position="1010"/>
    </location>
    <ligand>
        <name>Zn(2+)</name>
        <dbReference type="ChEBI" id="CHEBI:29105"/>
        <label>4</label>
    </ligand>
</feature>
<feature type="binding site" evidence="1">
    <location>
        <position position="1014"/>
    </location>
    <ligand>
        <name>Zn(2+)</name>
        <dbReference type="ChEBI" id="CHEBI:29105"/>
        <label>4</label>
    </ligand>
</feature>
<feature type="binding site" evidence="1">
    <location>
        <position position="1016"/>
    </location>
    <ligand>
        <name>Zn(2+)</name>
        <dbReference type="ChEBI" id="CHEBI:29105"/>
        <label>3</label>
    </ligand>
</feature>
<feature type="binding site" evidence="1">
    <location>
        <position position="1018"/>
    </location>
    <ligand>
        <name>Zn(2+)</name>
        <dbReference type="ChEBI" id="CHEBI:29105"/>
        <label>3</label>
    </ligand>
</feature>
<evidence type="ECO:0000250" key="1">
    <source>
        <dbReference type="UniProtKB" id="Q96S15"/>
    </source>
</evidence>
<evidence type="ECO:0000250" key="2">
    <source>
        <dbReference type="UniProtKB" id="Q9NXC5"/>
    </source>
</evidence>
<evidence type="ECO:0000256" key="3">
    <source>
        <dbReference type="SAM" id="MobiDB-lite"/>
    </source>
</evidence>
<evidence type="ECO:0000305" key="4"/>
<comment type="function">
    <text evidence="2">As a component of the GATOR complex may function in the amino acid-sensing branch of the TORC1 signaling pathway.</text>
</comment>
<comment type="catalytic activity">
    <reaction evidence="1">
        <text>S-ubiquitinyl-[E2 ubiquitin-conjugating enzyme]-L-cysteine + [acceptor protein]-L-lysine = [E2 ubiquitin-conjugating enzyme]-L-cysteine + N(6)-ubiquitinyl-[acceptor protein]-L-lysine.</text>
        <dbReference type="EC" id="2.3.2.27"/>
    </reaction>
</comment>
<comment type="pathway">
    <text evidence="1">Protein modification; protein ubiquitination.</text>
</comment>
<comment type="subunit">
    <text evidence="1">Probably part of the GATOR complex.</text>
</comment>
<comment type="subcellular location">
    <subcellularLocation>
        <location evidence="1">Lysosome membrane</location>
    </subcellularLocation>
</comment>
<comment type="similarity">
    <text evidence="4">Belongs to the WD repeat WDR24 family.</text>
</comment>